<keyword id="KW-0963">Cytoplasm</keyword>
<keyword id="KW-0671">Queuosine biosynthesis</keyword>
<keyword id="KW-0949">S-adenosyl-L-methionine</keyword>
<keyword id="KW-0808">Transferase</keyword>
<accession>Q325J6</accession>
<gene>
    <name evidence="1" type="primary">queA</name>
    <name type="ordered locus">SBO_0299</name>
</gene>
<reference key="1">
    <citation type="journal article" date="2005" name="Nucleic Acids Res.">
        <title>Genome dynamics and diversity of Shigella species, the etiologic agents of bacillary dysentery.</title>
        <authorList>
            <person name="Yang F."/>
            <person name="Yang J."/>
            <person name="Zhang X."/>
            <person name="Chen L."/>
            <person name="Jiang Y."/>
            <person name="Yan Y."/>
            <person name="Tang X."/>
            <person name="Wang J."/>
            <person name="Xiong Z."/>
            <person name="Dong J."/>
            <person name="Xue Y."/>
            <person name="Zhu Y."/>
            <person name="Xu X."/>
            <person name="Sun L."/>
            <person name="Chen S."/>
            <person name="Nie H."/>
            <person name="Peng J."/>
            <person name="Xu J."/>
            <person name="Wang Y."/>
            <person name="Yuan Z."/>
            <person name="Wen Y."/>
            <person name="Yao Z."/>
            <person name="Shen Y."/>
            <person name="Qiang B."/>
            <person name="Hou Y."/>
            <person name="Yu J."/>
            <person name="Jin Q."/>
        </authorList>
    </citation>
    <scope>NUCLEOTIDE SEQUENCE [LARGE SCALE GENOMIC DNA]</scope>
    <source>
        <strain>Sb227</strain>
    </source>
</reference>
<protein>
    <recommendedName>
        <fullName evidence="1">S-adenosylmethionine:tRNA ribosyltransferase-isomerase</fullName>
        <ecNumber evidence="1">2.4.99.17</ecNumber>
    </recommendedName>
    <alternativeName>
        <fullName evidence="1">Queuosine biosynthesis protein QueA</fullName>
    </alternativeName>
</protein>
<sequence>MRVTDFFFELPESLIAHYPMPERSSCRLLSLDGPTGALTHGTFTDLLDKLNPGDLLVFNNTRVIPARLFGRKASGGKIEVLVERMLDDKRILAHIRASKAPKPGAELLLGDDESINATMTARHGALFEVEFNDDRSVLDILNSIGHMPLPPYIDRPDEDADRELYQTVYSEKPGAVAAPTAGLHFDEPLLEKLRAKGVEMAFVTLHVGAGTFQPVRVDTIEDHIMHSEYAEVPQDVVDAVLAAKARGNRVIAVGTTSVRSLESAAQAAKNDLIEPFFDDTQIFIYPGFQYKVVDALVTNFHLPESTLIMLVSAFAGYQHTMNAYKAAVEEKYRFFSYGDAMFITYNPQAINERVGE</sequence>
<dbReference type="EC" id="2.4.99.17" evidence="1"/>
<dbReference type="EMBL" id="CP000036">
    <property type="protein sequence ID" value="ABB65012.1"/>
    <property type="molecule type" value="Genomic_DNA"/>
</dbReference>
<dbReference type="RefSeq" id="WP_001266475.1">
    <property type="nucleotide sequence ID" value="NC_007613.1"/>
</dbReference>
<dbReference type="SMR" id="Q325J6"/>
<dbReference type="KEGG" id="sbo:SBO_0299"/>
<dbReference type="HOGENOM" id="CLU_039110_1_0_6"/>
<dbReference type="UniPathway" id="UPA00392"/>
<dbReference type="Proteomes" id="UP000007067">
    <property type="component" value="Chromosome"/>
</dbReference>
<dbReference type="GO" id="GO:0005737">
    <property type="term" value="C:cytoplasm"/>
    <property type="evidence" value="ECO:0007669"/>
    <property type="project" value="UniProtKB-SubCell"/>
</dbReference>
<dbReference type="GO" id="GO:0051075">
    <property type="term" value="F:S-adenosylmethionine:tRNA ribosyltransferase-isomerase activity"/>
    <property type="evidence" value="ECO:0007669"/>
    <property type="project" value="UniProtKB-EC"/>
</dbReference>
<dbReference type="GO" id="GO:0008616">
    <property type="term" value="P:queuosine biosynthetic process"/>
    <property type="evidence" value="ECO:0007669"/>
    <property type="project" value="UniProtKB-UniRule"/>
</dbReference>
<dbReference type="GO" id="GO:0002099">
    <property type="term" value="P:tRNA wobble guanine modification"/>
    <property type="evidence" value="ECO:0007669"/>
    <property type="project" value="TreeGrafter"/>
</dbReference>
<dbReference type="FunFam" id="2.40.10.240:FF:000001">
    <property type="entry name" value="S-adenosylmethionine:tRNA ribosyltransferase-isomerase"/>
    <property type="match status" value="1"/>
</dbReference>
<dbReference type="FunFam" id="3.40.1780.10:FF:000001">
    <property type="entry name" value="S-adenosylmethionine:tRNA ribosyltransferase-isomerase"/>
    <property type="match status" value="1"/>
</dbReference>
<dbReference type="Gene3D" id="2.40.10.240">
    <property type="entry name" value="QueA-like"/>
    <property type="match status" value="1"/>
</dbReference>
<dbReference type="Gene3D" id="3.40.1780.10">
    <property type="entry name" value="QueA-like"/>
    <property type="match status" value="1"/>
</dbReference>
<dbReference type="HAMAP" id="MF_00113">
    <property type="entry name" value="QueA"/>
    <property type="match status" value="1"/>
</dbReference>
<dbReference type="InterPro" id="IPR003699">
    <property type="entry name" value="QueA"/>
</dbReference>
<dbReference type="InterPro" id="IPR042118">
    <property type="entry name" value="QueA_dom1"/>
</dbReference>
<dbReference type="InterPro" id="IPR042119">
    <property type="entry name" value="QueA_dom2"/>
</dbReference>
<dbReference type="InterPro" id="IPR036100">
    <property type="entry name" value="QueA_sf"/>
</dbReference>
<dbReference type="NCBIfam" id="NF001140">
    <property type="entry name" value="PRK00147.1"/>
    <property type="match status" value="1"/>
</dbReference>
<dbReference type="NCBIfam" id="TIGR00113">
    <property type="entry name" value="queA"/>
    <property type="match status" value="1"/>
</dbReference>
<dbReference type="PANTHER" id="PTHR30307">
    <property type="entry name" value="S-ADENOSYLMETHIONINE:TRNA RIBOSYLTRANSFERASE-ISOMERASE"/>
    <property type="match status" value="1"/>
</dbReference>
<dbReference type="PANTHER" id="PTHR30307:SF0">
    <property type="entry name" value="S-ADENOSYLMETHIONINE:TRNA RIBOSYLTRANSFERASE-ISOMERASE"/>
    <property type="match status" value="1"/>
</dbReference>
<dbReference type="Pfam" id="PF02547">
    <property type="entry name" value="Queuosine_synth"/>
    <property type="match status" value="1"/>
</dbReference>
<dbReference type="SUPFAM" id="SSF111337">
    <property type="entry name" value="QueA-like"/>
    <property type="match status" value="1"/>
</dbReference>
<comment type="function">
    <text evidence="1">Transfers and isomerizes the ribose moiety from AdoMet to the 7-aminomethyl group of 7-deazaguanine (preQ1-tRNA) to give epoxyqueuosine (oQ-tRNA).</text>
</comment>
<comment type="catalytic activity">
    <reaction evidence="1">
        <text>7-aminomethyl-7-carbaguanosine(34) in tRNA + S-adenosyl-L-methionine = epoxyqueuosine(34) in tRNA + adenine + L-methionine + 2 H(+)</text>
        <dbReference type="Rhea" id="RHEA:32155"/>
        <dbReference type="Rhea" id="RHEA-COMP:10342"/>
        <dbReference type="Rhea" id="RHEA-COMP:18582"/>
        <dbReference type="ChEBI" id="CHEBI:15378"/>
        <dbReference type="ChEBI" id="CHEBI:16708"/>
        <dbReference type="ChEBI" id="CHEBI:57844"/>
        <dbReference type="ChEBI" id="CHEBI:59789"/>
        <dbReference type="ChEBI" id="CHEBI:82833"/>
        <dbReference type="ChEBI" id="CHEBI:194443"/>
        <dbReference type="EC" id="2.4.99.17"/>
    </reaction>
</comment>
<comment type="pathway">
    <text evidence="1">tRNA modification; tRNA-queuosine biosynthesis.</text>
</comment>
<comment type="subunit">
    <text evidence="1">Monomer.</text>
</comment>
<comment type="subcellular location">
    <subcellularLocation>
        <location evidence="1">Cytoplasm</location>
    </subcellularLocation>
</comment>
<comment type="similarity">
    <text evidence="1">Belongs to the QueA family.</text>
</comment>
<evidence type="ECO:0000255" key="1">
    <source>
        <dbReference type="HAMAP-Rule" id="MF_00113"/>
    </source>
</evidence>
<organism>
    <name type="scientific">Shigella boydii serotype 4 (strain Sb227)</name>
    <dbReference type="NCBI Taxonomy" id="300268"/>
    <lineage>
        <taxon>Bacteria</taxon>
        <taxon>Pseudomonadati</taxon>
        <taxon>Pseudomonadota</taxon>
        <taxon>Gammaproteobacteria</taxon>
        <taxon>Enterobacterales</taxon>
        <taxon>Enterobacteriaceae</taxon>
        <taxon>Shigella</taxon>
    </lineage>
</organism>
<proteinExistence type="inferred from homology"/>
<feature type="chain" id="PRO_0000231371" description="S-adenosylmethionine:tRNA ribosyltransferase-isomerase">
    <location>
        <begin position="1"/>
        <end position="356"/>
    </location>
</feature>
<name>QUEA_SHIBS</name>